<evidence type="ECO:0000250" key="1">
    <source>
        <dbReference type="UniProtKB" id="P04798"/>
    </source>
</evidence>
<evidence type="ECO:0000255" key="2"/>
<evidence type="ECO:0000255" key="3">
    <source>
        <dbReference type="PROSITE-ProRule" id="PRU00498"/>
    </source>
</evidence>
<evidence type="ECO:0000269" key="4">
    <source>
    </source>
</evidence>
<evidence type="ECO:0000269" key="5">
    <source>
    </source>
</evidence>
<evidence type="ECO:0000269" key="6">
    <source>
    </source>
</evidence>
<evidence type="ECO:0000269" key="7">
    <source>
    </source>
</evidence>
<evidence type="ECO:0000269" key="8">
    <source>
    </source>
</evidence>
<evidence type="ECO:0000269" key="9">
    <source>
    </source>
</evidence>
<evidence type="ECO:0000269" key="10">
    <source>
    </source>
</evidence>
<evidence type="ECO:0000269" key="11">
    <source>
    </source>
</evidence>
<evidence type="ECO:0000269" key="12">
    <source>
    </source>
</evidence>
<evidence type="ECO:0000269" key="13">
    <source>
    </source>
</evidence>
<evidence type="ECO:0000269" key="14">
    <source>
    </source>
</evidence>
<evidence type="ECO:0000303" key="15">
    <source>
    </source>
</evidence>
<evidence type="ECO:0000305" key="16"/>
<evidence type="ECO:0000305" key="17">
    <source>
    </source>
</evidence>
<accession>Q4WMJ0</accession>
<accession>Q5MBU6</accession>
<reference key="1">
    <citation type="journal article" date="2005" name="FEMS Microbiol. Lett.">
        <title>Bioinformatic and expression analysis of the putative gliotoxin biosynthetic gene cluster of Aspergillus fumigatus.</title>
        <authorList>
            <person name="Gardiner D.M."/>
            <person name="Howlett B.J."/>
        </authorList>
    </citation>
    <scope>NUCLEOTIDE SEQUENCE [GENOMIC DNA]</scope>
    <scope>FUNCTION</scope>
    <source>
        <strain>ATCC MYA-4609 / CBS 101355 / FGSC A1100 / Af293</strain>
    </source>
</reference>
<reference key="2">
    <citation type="journal article" date="2005" name="Nature">
        <title>Genomic sequence of the pathogenic and allergenic filamentous fungus Aspergillus fumigatus.</title>
        <authorList>
            <person name="Nierman W.C."/>
            <person name="Pain A."/>
            <person name="Anderson M.J."/>
            <person name="Wortman J.R."/>
            <person name="Kim H.S."/>
            <person name="Arroyo J."/>
            <person name="Berriman M."/>
            <person name="Abe K."/>
            <person name="Archer D.B."/>
            <person name="Bermejo C."/>
            <person name="Bennett J.W."/>
            <person name="Bowyer P."/>
            <person name="Chen D."/>
            <person name="Collins M."/>
            <person name="Coulsen R."/>
            <person name="Davies R."/>
            <person name="Dyer P.S."/>
            <person name="Farman M.L."/>
            <person name="Fedorova N."/>
            <person name="Fedorova N.D."/>
            <person name="Feldblyum T.V."/>
            <person name="Fischer R."/>
            <person name="Fosker N."/>
            <person name="Fraser A."/>
            <person name="Garcia J.L."/>
            <person name="Garcia M.J."/>
            <person name="Goble A."/>
            <person name="Goldman G.H."/>
            <person name="Gomi K."/>
            <person name="Griffith-Jones S."/>
            <person name="Gwilliam R."/>
            <person name="Haas B.J."/>
            <person name="Haas H."/>
            <person name="Harris D.E."/>
            <person name="Horiuchi H."/>
            <person name="Huang J."/>
            <person name="Humphray S."/>
            <person name="Jimenez J."/>
            <person name="Keller N."/>
            <person name="Khouri H."/>
            <person name="Kitamoto K."/>
            <person name="Kobayashi T."/>
            <person name="Konzack S."/>
            <person name="Kulkarni R."/>
            <person name="Kumagai T."/>
            <person name="Lafton A."/>
            <person name="Latge J.-P."/>
            <person name="Li W."/>
            <person name="Lord A."/>
            <person name="Lu C."/>
            <person name="Majoros W.H."/>
            <person name="May G.S."/>
            <person name="Miller B.L."/>
            <person name="Mohamoud Y."/>
            <person name="Molina M."/>
            <person name="Monod M."/>
            <person name="Mouyna I."/>
            <person name="Mulligan S."/>
            <person name="Murphy L.D."/>
            <person name="O'Neil S."/>
            <person name="Paulsen I."/>
            <person name="Penalva M.A."/>
            <person name="Pertea M."/>
            <person name="Price C."/>
            <person name="Pritchard B.L."/>
            <person name="Quail M.A."/>
            <person name="Rabbinowitsch E."/>
            <person name="Rawlins N."/>
            <person name="Rajandream M.A."/>
            <person name="Reichard U."/>
            <person name="Renauld H."/>
            <person name="Robson G.D."/>
            <person name="Rodriguez de Cordoba S."/>
            <person name="Rodriguez-Pena J.M."/>
            <person name="Ronning C.M."/>
            <person name="Rutter S."/>
            <person name="Salzberg S.L."/>
            <person name="Sanchez M."/>
            <person name="Sanchez-Ferrero J.C."/>
            <person name="Saunders D."/>
            <person name="Seeger K."/>
            <person name="Squares R."/>
            <person name="Squares S."/>
            <person name="Takeuchi M."/>
            <person name="Tekaia F."/>
            <person name="Turner G."/>
            <person name="Vazquez de Aldana C.R."/>
            <person name="Weidman J."/>
            <person name="White O."/>
            <person name="Woodward J.R."/>
            <person name="Yu J.-H."/>
            <person name="Fraser C.M."/>
            <person name="Galagan J.E."/>
            <person name="Asai K."/>
            <person name="Machida M."/>
            <person name="Hall N."/>
            <person name="Barrell B.G."/>
            <person name="Denning D.W."/>
        </authorList>
    </citation>
    <scope>NUCLEOTIDE SEQUENCE [LARGE SCALE GENOMIC DNA]</scope>
    <source>
        <strain>ATCC MYA-4609 / CBS 101355 / FGSC A1100 / Af293</strain>
    </source>
</reference>
<reference key="3">
    <citation type="journal article" date="2006" name="Biochemistry">
        <title>GliP, a multimodular nonribosomal peptide synthetase in Aspergillus fumigatus, makes the diketopiperazine scaffold of gliotoxin.</title>
        <authorList>
            <person name="Balibar C.J."/>
            <person name="Walsh C.T."/>
        </authorList>
    </citation>
    <scope>FUNCTION</scope>
</reference>
<reference key="4">
    <citation type="journal article" date="2007" name="Eukaryot. Cell">
        <title>Gliotoxin is a virulence factor of Aspergillus fumigatus: gliP deletion attenuates virulence in mice immunosuppressed with hydrocortisone.</title>
        <authorList>
            <person name="Sugui J.A."/>
            <person name="Pardo J."/>
            <person name="Chang Y.C."/>
            <person name="Zarember K.A."/>
            <person name="Nardone G."/>
            <person name="Galvez E.M."/>
            <person name="Mullbacher A."/>
            <person name="Gallin J.I."/>
            <person name="Simon M.M."/>
            <person name="Kwon-Chung K.J."/>
        </authorList>
    </citation>
    <scope>FUNCTION</scope>
</reference>
<reference key="5">
    <citation type="journal article" date="2008" name="J. Infect. Dis.">
        <title>Gliotoxin production in Aspergillus fumigatus contributes to host-specific differences in virulence.</title>
        <authorList>
            <person name="Spikes S."/>
            <person name="Xu R."/>
            <person name="Nguyen C.K."/>
            <person name="Chamilos G."/>
            <person name="Kontoyiannis D.P."/>
            <person name="Jacobson R.H."/>
            <person name="Ejzykowicz D.E."/>
            <person name="Chiang L.Y."/>
            <person name="Filler S.G."/>
            <person name="May G.S."/>
        </authorList>
    </citation>
    <scope>FUNCTION</scope>
</reference>
<reference key="6">
    <citation type="journal article" date="2010" name="PLoS Pathog.">
        <title>Self-protection against gliotoxin--a component of the gliotoxin biosynthetic cluster, GliT, completely protects Aspergillus fumigatus against exogenous gliotoxin.</title>
        <authorList>
            <person name="Schrettl M."/>
            <person name="Carberry S."/>
            <person name="Kavanagh K."/>
            <person name="Haas H."/>
            <person name="Jones G.W."/>
            <person name="O'Brien J."/>
            <person name="Nolan A."/>
            <person name="Stephens J."/>
            <person name="Fenelon O."/>
            <person name="Doyle S."/>
        </authorList>
    </citation>
    <scope>FUNCTION</scope>
</reference>
<reference key="7">
    <citation type="journal article" date="2011" name="Chem. Biol.">
        <title>The role of glutathione S-transferase GliG in gliotoxin biosynthesis in Aspergillus fumigatus.</title>
        <authorList>
            <person name="Davis C."/>
            <person name="Carberry S."/>
            <person name="Schrettl M."/>
            <person name="Singh I."/>
            <person name="Stephens J.C."/>
            <person name="Barry S.M."/>
            <person name="Kavanagh K."/>
            <person name="Challis G.L."/>
            <person name="Brougham D."/>
            <person name="Doyle S."/>
        </authorList>
    </citation>
    <scope>FUNCTION</scope>
</reference>
<reference key="8">
    <citation type="journal article" date="2011" name="J. Am. Chem. Soc.">
        <title>Identification of cryptic products of the gliotoxin gene cluster using NMR-based comparative metabolomics and a model for gliotoxin biosynthesis.</title>
        <authorList>
            <person name="Forseth R.R."/>
            <person name="Fox E.M."/>
            <person name="Chung D."/>
            <person name="Howlett B.J."/>
            <person name="Keller N.P."/>
            <person name="Schroeder F.C."/>
        </authorList>
    </citation>
    <scope>FUNCTION</scope>
</reference>
<reference key="9">
    <citation type="journal article" date="2011" name="J. Am. Chem. Soc.">
        <title>A dedicated glutathione S-transferase mediates carbon-sulfur bond formation in gliotoxin biosynthesis.</title>
        <authorList>
            <person name="Scharf D.H."/>
            <person name="Remme N."/>
            <person name="Habel A."/>
            <person name="Chankhamjon P."/>
            <person name="Scherlach K."/>
            <person name="Heinekamp T."/>
            <person name="Hortschansky P."/>
            <person name="Brakhage A.A."/>
            <person name="Hertweck C."/>
        </authorList>
    </citation>
    <scope>FUNCTION</scope>
</reference>
<reference key="10">
    <citation type="journal article" date="2012" name="Angew. Chem. Int. Ed.">
        <title>Epidithiol formation by an unprecedented twin carbon-sulfur lyase in the gliotoxin pathway.</title>
        <authorList>
            <person name="Scharf D.H."/>
            <person name="Chankhamjon P."/>
            <person name="Scherlach K."/>
            <person name="Heinekamp T."/>
            <person name="Roth M."/>
            <person name="Brakhage A.A."/>
            <person name="Hertweck C."/>
        </authorList>
    </citation>
    <scope>FUNCTION</scope>
</reference>
<reference key="11">
    <citation type="journal article" date="2012" name="Eukaryot. Cell">
        <title>The Aspergillus fumigatus protein GliK protects against oxidative stress and is essential for gliotoxin biosynthesis.</title>
        <authorList>
            <person name="Gallagher L."/>
            <person name="Owens R.A."/>
            <person name="Dolan S.K."/>
            <person name="O'Keeffe G."/>
            <person name="Schrettl M."/>
            <person name="Kavanagh K."/>
            <person name="Jones G.W."/>
            <person name="Doyle S."/>
        </authorList>
    </citation>
    <scope>FUNCTION</scope>
</reference>
<reference key="12">
    <citation type="journal article" date="2013" name="Angew. Chem. Int. Ed.">
        <title>Epidithiodiketopiperazine biosynthesis: a four-enzyme cascade converts glutathione conjugates into transannular disulfide bridges.</title>
        <authorList>
            <person name="Scharf D.H."/>
            <person name="Chankhamjon P."/>
            <person name="Scherlach K."/>
            <person name="Heinekamp T."/>
            <person name="Willing K."/>
            <person name="Brakhage A.A."/>
            <person name="Hertweck C."/>
        </authorList>
    </citation>
    <scope>FUNCTION</scope>
</reference>
<reference key="13">
    <citation type="journal article" date="2013" name="Bioorg. Med. Chem. Lett.">
        <title>Reconstitution of the early steps of gliotoxin biosynthesis in Aspergillus nidulans reveals the role of the monooxygenase GliC.</title>
        <authorList>
            <person name="Chang S.L."/>
            <person name="Chiang Y.M."/>
            <person name="Yeh H.H."/>
            <person name="Wu T.K."/>
            <person name="Wang C.C."/>
        </authorList>
    </citation>
    <scope>FUNCTION</scope>
</reference>
<reference key="14">
    <citation type="journal article" date="2014" name="J. Am. Chem. Soc.">
        <title>Opposed effects of enzymatic gliotoxin N- and S-methylations.</title>
        <authorList>
            <person name="Scharf D.H."/>
            <person name="Habel A."/>
            <person name="Heinekamp T."/>
            <person name="Brakhage A.A."/>
            <person name="Hertweck C."/>
        </authorList>
    </citation>
    <scope>FUNCTION</scope>
</reference>
<reference key="15">
    <citation type="journal article" date="2015" name="Eukaryot. Cell">
        <title>Interplay between gliotoxin resistance, secretion, and the methyl/methionine cycle in Aspergillus fumigatus.</title>
        <authorList>
            <person name="Owens R.A."/>
            <person name="O'Keeffe G."/>
            <person name="Smith E.B."/>
            <person name="Dolan S.K."/>
            <person name="Hammel S."/>
            <person name="Sheridan K.J."/>
            <person name="Fitzpatrick D.A."/>
            <person name="Keane T.M."/>
            <person name="Jones G.W."/>
            <person name="Doyle S."/>
        </authorList>
    </citation>
    <scope>FUNCTION</scope>
</reference>
<dbReference type="EC" id="1.-.-.-" evidence="17"/>
<dbReference type="EMBL" id="AY838877">
    <property type="protein sequence ID" value="AAW03300.1"/>
    <property type="status" value="ALT_SEQ"/>
    <property type="molecule type" value="Genomic_DNA"/>
</dbReference>
<dbReference type="EMBL" id="AAHF01000006">
    <property type="protein sequence ID" value="EAL88824.1"/>
    <property type="molecule type" value="Genomic_DNA"/>
</dbReference>
<dbReference type="RefSeq" id="XP_750862.1">
    <property type="nucleotide sequence ID" value="XM_745769.1"/>
</dbReference>
<dbReference type="SMR" id="Q4WMJ0"/>
<dbReference type="STRING" id="330879.Q4WMJ0"/>
<dbReference type="GlyCosmos" id="Q4WMJ0">
    <property type="glycosylation" value="2 sites, No reported glycans"/>
</dbReference>
<dbReference type="EnsemblFungi" id="EAL88824">
    <property type="protein sequence ID" value="EAL88824"/>
    <property type="gene ID" value="AFUA_6G09730"/>
</dbReference>
<dbReference type="GeneID" id="3508167"/>
<dbReference type="KEGG" id="afm:AFUA_6G09730"/>
<dbReference type="VEuPathDB" id="FungiDB:Afu6g09730"/>
<dbReference type="eggNOG" id="KOG0156">
    <property type="taxonomic scope" value="Eukaryota"/>
</dbReference>
<dbReference type="HOGENOM" id="CLU_022195_0_2_1"/>
<dbReference type="InParanoid" id="Q4WMJ0"/>
<dbReference type="OMA" id="EYSYMGT"/>
<dbReference type="OrthoDB" id="1844152at2759"/>
<dbReference type="Proteomes" id="UP000002530">
    <property type="component" value="Chromosome 6"/>
</dbReference>
<dbReference type="GO" id="GO:0016020">
    <property type="term" value="C:membrane"/>
    <property type="evidence" value="ECO:0007669"/>
    <property type="project" value="UniProtKB-SubCell"/>
</dbReference>
<dbReference type="GO" id="GO:0020037">
    <property type="term" value="F:heme binding"/>
    <property type="evidence" value="ECO:0007669"/>
    <property type="project" value="InterPro"/>
</dbReference>
<dbReference type="GO" id="GO:0005506">
    <property type="term" value="F:iron ion binding"/>
    <property type="evidence" value="ECO:0007669"/>
    <property type="project" value="InterPro"/>
</dbReference>
<dbReference type="GO" id="GO:0004497">
    <property type="term" value="F:monooxygenase activity"/>
    <property type="evidence" value="ECO:0007669"/>
    <property type="project" value="UniProtKB-KW"/>
</dbReference>
<dbReference type="GO" id="GO:0016705">
    <property type="term" value="F:oxidoreductase activity, acting on paired donors, with incorporation or reduction of molecular oxygen"/>
    <property type="evidence" value="ECO:0007669"/>
    <property type="project" value="InterPro"/>
</dbReference>
<dbReference type="GO" id="GO:2001310">
    <property type="term" value="P:gliotoxin biosynthetic process"/>
    <property type="evidence" value="ECO:0000304"/>
    <property type="project" value="UniProtKB"/>
</dbReference>
<dbReference type="GO" id="GO:0043386">
    <property type="term" value="P:mycotoxin biosynthetic process"/>
    <property type="evidence" value="ECO:0000270"/>
    <property type="project" value="AspGD"/>
</dbReference>
<dbReference type="GO" id="GO:0052562">
    <property type="term" value="P:symbiont-mediated suppression of host immune response"/>
    <property type="evidence" value="ECO:0000304"/>
    <property type="project" value="UniProtKB"/>
</dbReference>
<dbReference type="CDD" id="cd11041">
    <property type="entry name" value="CYP503A1-like"/>
    <property type="match status" value="1"/>
</dbReference>
<dbReference type="FunFam" id="1.10.630.10:FF:000059">
    <property type="entry name" value="Cytochrome P450 monooxygenase"/>
    <property type="match status" value="1"/>
</dbReference>
<dbReference type="Gene3D" id="1.10.630.10">
    <property type="entry name" value="Cytochrome P450"/>
    <property type="match status" value="1"/>
</dbReference>
<dbReference type="InterPro" id="IPR001128">
    <property type="entry name" value="Cyt_P450"/>
</dbReference>
<dbReference type="InterPro" id="IPR002403">
    <property type="entry name" value="Cyt_P450_E_grp-IV"/>
</dbReference>
<dbReference type="InterPro" id="IPR036396">
    <property type="entry name" value="Cyt_P450_sf"/>
</dbReference>
<dbReference type="PANTHER" id="PTHR46206">
    <property type="entry name" value="CYTOCHROME P450"/>
    <property type="match status" value="1"/>
</dbReference>
<dbReference type="PANTHER" id="PTHR46206:SF6">
    <property type="entry name" value="CYTOCHROME P450 MONOOXYGENASE AN1598-RELATED"/>
    <property type="match status" value="1"/>
</dbReference>
<dbReference type="Pfam" id="PF00067">
    <property type="entry name" value="p450"/>
    <property type="match status" value="1"/>
</dbReference>
<dbReference type="PRINTS" id="PR00465">
    <property type="entry name" value="EP450IV"/>
</dbReference>
<dbReference type="SUPFAM" id="SSF48264">
    <property type="entry name" value="Cytochrome P450"/>
    <property type="match status" value="1"/>
</dbReference>
<organism>
    <name type="scientific">Aspergillus fumigatus (strain ATCC MYA-4609 / CBS 101355 / FGSC A1100 / Af293)</name>
    <name type="common">Neosartorya fumigata</name>
    <dbReference type="NCBI Taxonomy" id="330879"/>
    <lineage>
        <taxon>Eukaryota</taxon>
        <taxon>Fungi</taxon>
        <taxon>Dikarya</taxon>
        <taxon>Ascomycota</taxon>
        <taxon>Pezizomycotina</taxon>
        <taxon>Eurotiomycetes</taxon>
        <taxon>Eurotiomycetidae</taxon>
        <taxon>Eurotiales</taxon>
        <taxon>Aspergillaceae</taxon>
        <taxon>Aspergillus</taxon>
        <taxon>Aspergillus subgen. Fumigati</taxon>
    </lineage>
</organism>
<comment type="function">
    <text evidence="4 5 6 7 8 9 10 11 12 13 14">Cytochrome P450 monooxygenase; part of the gene cluster that mediates the biosynthesis of gliotoxin, a member of the epipolythiodioxopiperazine (ETP) class of toxins characterized by a disulfide bridged cyclic dipeptide (PubMed:15979823, PubMed:21612254). The first step in gliotoxin biosynthesis is the condensation of serine and phenylalanine to form the cyclo-L-phenylalanyl-L-serine diketopiperazine (DKP) by the NRPS gliP (PubMed:17154540, PubMed:21612254). GliP is also able to produce the DKP cyclo-L-tryptophanyl-L-serine, suggesting that the substrate specificity of the first adenylation (A) domain in gliP is sufficiently relaxed to accommodate both L-Phe and L-Trp (PubMed:23434416). The cytochrome P450 monooxygenase gliC has been shown to catalyze the subsequent hydroxylation of the alpha-carbon of L-Phe in cyclo-L-phenylalanyl-L-serine whereas the second cytochrome P450 enzyme, gliF, is presumably involved in the modification of the DKP side chain (PubMed:23434416, PubMed:24039048). The glutathione S-transferase (GST) gliG then forms a bis-glutathionylated biosynthetic intermediate which is responsible for the sulfurization of gliotoxin (PubMed:21513890, PubMed:21749092). This bis-glutathionylated intermediate is subsequently processed by the gamma-glutamyl cyclotransferase gliK to remove both gamma-glutamyl moieties (PubMed:22903976, PubMed:24039048). Subsequent processing via gliI yields a biosynthetic intermediate, which is N-methylated via the N-methyltransferase gliN, before the gliotoxin oxidoreductase gliT-mediated disulfide bridge closure (PubMed:20548963, PubMed:22936680, PubMed:24039048, PubMed:25062268). GliN-mediated amide methylation confers stability to ETP, damping the spontaneous formation of tri- and tetrasulfides (PubMed:25062268). Intracellular dithiol gliotoxin oxidized by gliT is subsequently effluxed by gliA (PubMed:26150413). Gliotoxin contributes to pathogenesis during invasive aspergillosis (PubMed:17601876, PubMed:18199036). In macrophages and neutrophils, gliotoxin showed inhibition of various different cell functions including cytokine production, antigen presentation, phagocytosis, and production of reactive oxygen species (PubMed:17601876).</text>
</comment>
<comment type="cofactor">
    <cofactor evidence="1">
        <name>heme</name>
        <dbReference type="ChEBI" id="CHEBI:30413"/>
    </cofactor>
</comment>
<comment type="pathway">
    <text evidence="17">Mycotoxin biosynthesis.</text>
</comment>
<comment type="subcellular location">
    <subcellularLocation>
        <location evidence="2">Membrane</location>
        <topology evidence="2">Single-pass membrane protein</topology>
    </subcellularLocation>
</comment>
<comment type="similarity">
    <text evidence="16">Belongs to the cytochrome P450 family.</text>
</comment>
<comment type="sequence caution" evidence="16">
    <conflict type="erroneous gene model prediction">
        <sequence resource="EMBL-CDS" id="AAW03300"/>
    </conflict>
</comment>
<protein>
    <recommendedName>
        <fullName evidence="15">Cytochrome P450 monooxygenase gliF</fullName>
        <ecNumber evidence="17">1.-.-.-</ecNumber>
    </recommendedName>
    <alternativeName>
        <fullName evidence="15">Gliotoxin biosynthesis protein F</fullName>
    </alternativeName>
</protein>
<proteinExistence type="inferred from homology"/>
<gene>
    <name evidence="15" type="primary">gliF</name>
    <name type="ORF">AFUA_6G09730</name>
</gene>
<keyword id="KW-0325">Glycoprotein</keyword>
<keyword id="KW-0349">Heme</keyword>
<keyword id="KW-0408">Iron</keyword>
<keyword id="KW-0472">Membrane</keyword>
<keyword id="KW-0479">Metal-binding</keyword>
<keyword id="KW-0503">Monooxygenase</keyword>
<keyword id="KW-0560">Oxidoreductase</keyword>
<keyword id="KW-1185">Reference proteome</keyword>
<keyword id="KW-0812">Transmembrane</keyword>
<keyword id="KW-1133">Transmembrane helix</keyword>
<keyword id="KW-0843">Virulence</keyword>
<feature type="chain" id="PRO_0000437705" description="Cytochrome P450 monooxygenase gliF">
    <location>
        <begin position="1"/>
        <end position="504"/>
    </location>
</feature>
<feature type="transmembrane region" description="Helical" evidence="2">
    <location>
        <begin position="13"/>
        <end position="31"/>
    </location>
</feature>
<feature type="binding site" description="axial binding residue" evidence="1">
    <location>
        <position position="449"/>
    </location>
    <ligand>
        <name>heme</name>
        <dbReference type="ChEBI" id="CHEBI:30413"/>
    </ligand>
    <ligandPart>
        <name>Fe</name>
        <dbReference type="ChEBI" id="CHEBI:18248"/>
    </ligandPart>
</feature>
<feature type="glycosylation site" description="N-linked (GlcNAc...) asparagine" evidence="3">
    <location>
        <position position="197"/>
    </location>
</feature>
<feature type="glycosylation site" description="N-linked (GlcNAc...) asparagine" evidence="3">
    <location>
        <position position="299"/>
    </location>
</feature>
<name>GLIF_ASPFU</name>
<sequence>MDQVYLPQSVRTAVAVSFGVGLLYWVYRLLLQKTKSLKALDLPVLQSVGDQDIVKTLEEGHAKYPDTPFALGVPGQQLVVLPVSEIDTVKALPENQLSIKKHHYNQFLGEYSYMGTKADEFDDAMRYLLVRNTPAVLASFTAEIDYAMSTVLQVPPNSWTRVKPRSIMPKVATILSGRAFVGLPLSREPDWIESNVNYTQDVSRAWMVLRFYPHWIRPLVAPFLREVKTLEQNKALIGRKIAKLLADQEAQKLSPAQEKIPGGDMIDWFKSRYQAQGKTATAQQLTRDQLLATFASIYNLSNALTYVMFDLAANPAAVDELREELDQVLGPNVGAESIDKTALPRLIKLDSFVRESQRLSPTSLVNIPRIVTDPNGLRLKTGHVIPPGYLVMVRAQPINQSPTLYPNPERFDAFRFARLRQQGGANENRWQHTSTGADNINFGHGIWACPGRFFASAEIKVVVAYVIRHYDLRLIEGRPHPKPKYGGLAIFPDAGAEVELKPRV</sequence>